<proteinExistence type="inferred from homology"/>
<keyword id="KW-0997">Cell inner membrane</keyword>
<keyword id="KW-1003">Cell membrane</keyword>
<keyword id="KW-0472">Membrane</keyword>
<keyword id="KW-0808">Transferase</keyword>
<keyword id="KW-0812">Transmembrane</keyword>
<keyword id="KW-1133">Transmembrane helix</keyword>
<name>LGT_BART1</name>
<reference key="1">
    <citation type="journal article" date="2007" name="Nat. Genet.">
        <title>Genomic analysis of Bartonella identifies type IV secretion systems as host adaptability factors.</title>
        <authorList>
            <person name="Saenz H.L."/>
            <person name="Engel P."/>
            <person name="Stoeckli M.C."/>
            <person name="Lanz C."/>
            <person name="Raddatz G."/>
            <person name="Vayssier-Taussat M."/>
            <person name="Birtles R."/>
            <person name="Schuster S.C."/>
            <person name="Dehio C."/>
        </authorList>
    </citation>
    <scope>NUCLEOTIDE SEQUENCE [LARGE SCALE GENOMIC DNA]</scope>
    <source>
        <strain>CIP 105476 / IBS 506</strain>
    </source>
</reference>
<sequence>MNNLVCPAIAFPSFLDPVIIQLGPITLHWYGLGYVVGILFAWWYAQKLLKKPSLWHKNHPPMTKEKIGDFVVWSAISVVVGGRLGQVLVWDPLYYFSHPSSIIAVWDGGMSFHGGLIGIIIAMILFARKNNINIRSMFDIIAAGAPIGIGIVRICNFINQELWGNATTQPWAVCFPLDPYYLPRHPSQLYEAFMEGFILFMILFIVIFTFKAFKRRGTVSGIFIIGYAIARSISEVYRAPQEDPEWFSTLFHSTGFTYGMALSLPMLLLGFYLLLQAFKDKSTENDTPQRKN</sequence>
<dbReference type="EC" id="2.5.1.145" evidence="1"/>
<dbReference type="EMBL" id="AM260525">
    <property type="protein sequence ID" value="CAK01155.1"/>
    <property type="molecule type" value="Genomic_DNA"/>
</dbReference>
<dbReference type="RefSeq" id="WP_012231268.1">
    <property type="nucleotide sequence ID" value="NC_010161.1"/>
</dbReference>
<dbReference type="SMR" id="A9IRA0"/>
<dbReference type="KEGG" id="btr:BT_0733"/>
<dbReference type="eggNOG" id="COG0682">
    <property type="taxonomic scope" value="Bacteria"/>
</dbReference>
<dbReference type="HOGENOM" id="CLU_013386_1_0_5"/>
<dbReference type="UniPathway" id="UPA00664"/>
<dbReference type="Proteomes" id="UP000001592">
    <property type="component" value="Chromosome"/>
</dbReference>
<dbReference type="GO" id="GO:0005886">
    <property type="term" value="C:plasma membrane"/>
    <property type="evidence" value="ECO:0007669"/>
    <property type="project" value="UniProtKB-SubCell"/>
</dbReference>
<dbReference type="GO" id="GO:0008961">
    <property type="term" value="F:phosphatidylglycerol-prolipoprotein diacylglyceryl transferase activity"/>
    <property type="evidence" value="ECO:0007669"/>
    <property type="project" value="UniProtKB-UniRule"/>
</dbReference>
<dbReference type="GO" id="GO:0042158">
    <property type="term" value="P:lipoprotein biosynthetic process"/>
    <property type="evidence" value="ECO:0007669"/>
    <property type="project" value="UniProtKB-UniRule"/>
</dbReference>
<dbReference type="HAMAP" id="MF_01147">
    <property type="entry name" value="Lgt"/>
    <property type="match status" value="1"/>
</dbReference>
<dbReference type="InterPro" id="IPR001640">
    <property type="entry name" value="Lgt"/>
</dbReference>
<dbReference type="NCBIfam" id="TIGR00544">
    <property type="entry name" value="lgt"/>
    <property type="match status" value="1"/>
</dbReference>
<dbReference type="PANTHER" id="PTHR30589:SF0">
    <property type="entry name" value="PHOSPHATIDYLGLYCEROL--PROLIPOPROTEIN DIACYLGLYCERYL TRANSFERASE"/>
    <property type="match status" value="1"/>
</dbReference>
<dbReference type="PANTHER" id="PTHR30589">
    <property type="entry name" value="PROLIPOPROTEIN DIACYLGLYCERYL TRANSFERASE"/>
    <property type="match status" value="1"/>
</dbReference>
<dbReference type="Pfam" id="PF01790">
    <property type="entry name" value="LGT"/>
    <property type="match status" value="1"/>
</dbReference>
<gene>
    <name evidence="1" type="primary">lgt</name>
    <name type="ordered locus">BT_0733</name>
</gene>
<protein>
    <recommendedName>
        <fullName evidence="1">Phosphatidylglycerol--prolipoprotein diacylglyceryl transferase</fullName>
        <ecNumber evidence="1">2.5.1.145</ecNumber>
    </recommendedName>
</protein>
<organism>
    <name type="scientific">Bartonella tribocorum (strain CIP 105476 / IBS 506)</name>
    <dbReference type="NCBI Taxonomy" id="382640"/>
    <lineage>
        <taxon>Bacteria</taxon>
        <taxon>Pseudomonadati</taxon>
        <taxon>Pseudomonadota</taxon>
        <taxon>Alphaproteobacteria</taxon>
        <taxon>Hyphomicrobiales</taxon>
        <taxon>Bartonellaceae</taxon>
        <taxon>Bartonella</taxon>
    </lineage>
</organism>
<comment type="function">
    <text evidence="1">Catalyzes the transfer of the diacylglyceryl group from phosphatidylglycerol to the sulfhydryl group of the N-terminal cysteine of a prolipoprotein, the first step in the formation of mature lipoproteins.</text>
</comment>
<comment type="catalytic activity">
    <reaction evidence="1">
        <text>L-cysteinyl-[prolipoprotein] + a 1,2-diacyl-sn-glycero-3-phospho-(1'-sn-glycerol) = an S-1,2-diacyl-sn-glyceryl-L-cysteinyl-[prolipoprotein] + sn-glycerol 1-phosphate + H(+)</text>
        <dbReference type="Rhea" id="RHEA:56712"/>
        <dbReference type="Rhea" id="RHEA-COMP:14679"/>
        <dbReference type="Rhea" id="RHEA-COMP:14680"/>
        <dbReference type="ChEBI" id="CHEBI:15378"/>
        <dbReference type="ChEBI" id="CHEBI:29950"/>
        <dbReference type="ChEBI" id="CHEBI:57685"/>
        <dbReference type="ChEBI" id="CHEBI:64716"/>
        <dbReference type="ChEBI" id="CHEBI:140658"/>
        <dbReference type="EC" id="2.5.1.145"/>
    </reaction>
</comment>
<comment type="pathway">
    <text evidence="1">Protein modification; lipoprotein biosynthesis (diacylglyceryl transfer).</text>
</comment>
<comment type="subcellular location">
    <subcellularLocation>
        <location evidence="1">Cell inner membrane</location>
        <topology evidence="1">Multi-pass membrane protein</topology>
    </subcellularLocation>
</comment>
<comment type="similarity">
    <text evidence="1">Belongs to the Lgt family.</text>
</comment>
<feature type="chain" id="PRO_1000085067" description="Phosphatidylglycerol--prolipoprotein diacylglyceryl transferase">
    <location>
        <begin position="1"/>
        <end position="292"/>
    </location>
</feature>
<feature type="transmembrane region" description="Helical" evidence="1">
    <location>
        <begin position="25"/>
        <end position="45"/>
    </location>
</feature>
<feature type="transmembrane region" description="Helical" evidence="1">
    <location>
        <begin position="70"/>
        <end position="90"/>
    </location>
</feature>
<feature type="transmembrane region" description="Helical" evidence="1">
    <location>
        <begin position="102"/>
        <end position="122"/>
    </location>
</feature>
<feature type="transmembrane region" description="Helical" evidence="1">
    <location>
        <begin position="138"/>
        <end position="158"/>
    </location>
</feature>
<feature type="transmembrane region" description="Helical" evidence="1">
    <location>
        <begin position="193"/>
        <end position="213"/>
    </location>
</feature>
<feature type="transmembrane region" description="Helical" evidence="1">
    <location>
        <begin position="217"/>
        <end position="237"/>
    </location>
</feature>
<feature type="transmembrane region" description="Helical" evidence="1">
    <location>
        <begin position="255"/>
        <end position="275"/>
    </location>
</feature>
<feature type="binding site" evidence="1">
    <location>
        <position position="153"/>
    </location>
    <ligand>
        <name>a 1,2-diacyl-sn-glycero-3-phospho-(1'-sn-glycerol)</name>
        <dbReference type="ChEBI" id="CHEBI:64716"/>
    </ligand>
</feature>
<evidence type="ECO:0000255" key="1">
    <source>
        <dbReference type="HAMAP-Rule" id="MF_01147"/>
    </source>
</evidence>
<accession>A9IRA0</accession>